<reference key="1">
    <citation type="journal article" date="2001" name="Biochem. Biophys. Res. Commun.">
        <title>Identification and expression of a new sulfhydryl oxidase SOx-3 during the cell cycle and the estrus cycle in uterine cells.</title>
        <authorList>
            <person name="Musard J.-F."/>
            <person name="Sallot M."/>
            <person name="Dulieu P."/>
            <person name="Fraichard A."/>
            <person name="Ordener C."/>
            <person name="Remy-Martin J.-P."/>
            <person name="Jouvenot M."/>
            <person name="Adami P."/>
        </authorList>
    </citation>
    <scope>NUCLEOTIDE SEQUENCE [MRNA]</scope>
    <scope>TISSUE SPECIFICITY</scope>
</reference>
<evidence type="ECO:0000250" key="1"/>
<evidence type="ECO:0000250" key="2">
    <source>
        <dbReference type="UniProtKB" id="O00391"/>
    </source>
</evidence>
<evidence type="ECO:0000250" key="3">
    <source>
        <dbReference type="UniProtKB" id="Q6IUU3"/>
    </source>
</evidence>
<evidence type="ECO:0000255" key="4"/>
<evidence type="ECO:0000255" key="5">
    <source>
        <dbReference type="PROSITE-ProRule" id="PRU00654"/>
    </source>
</evidence>
<evidence type="ECO:0000255" key="6">
    <source>
        <dbReference type="PROSITE-ProRule" id="PRU00691"/>
    </source>
</evidence>
<evidence type="ECO:0000269" key="7">
    <source>
    </source>
</evidence>
<evidence type="ECO:0000303" key="8">
    <source>
    </source>
</evidence>
<evidence type="ECO:0000305" key="9"/>
<proteinExistence type="evidence at protein level"/>
<feature type="signal peptide" evidence="4">
    <location>
        <begin position="1"/>
        <end position="30"/>
    </location>
</feature>
<feature type="chain" id="PRO_0000249536" description="Sulfhydryl oxidase 1">
    <location>
        <begin position="31"/>
        <end position="613"/>
    </location>
</feature>
<feature type="domain" description="Thioredoxin" evidence="6">
    <location>
        <begin position="37"/>
        <end position="157"/>
    </location>
</feature>
<feature type="domain" description="ERV/ALR sulfhydryl oxidase" evidence="5">
    <location>
        <begin position="397"/>
        <end position="504"/>
    </location>
</feature>
<feature type="active site" description="Nucleophile" evidence="1">
    <location>
        <position position="71"/>
    </location>
</feature>
<feature type="active site" description="Nucleophile" evidence="1">
    <location>
        <position position="74"/>
    </location>
</feature>
<feature type="binding site" evidence="2">
    <location>
        <position position="402"/>
    </location>
    <ligand>
        <name>FAD</name>
        <dbReference type="ChEBI" id="CHEBI:57692"/>
    </ligand>
</feature>
<feature type="binding site" evidence="2">
    <location>
        <position position="409"/>
    </location>
    <ligand>
        <name>FAD</name>
        <dbReference type="ChEBI" id="CHEBI:57692"/>
    </ligand>
</feature>
<feature type="binding site" evidence="2">
    <location>
        <position position="413"/>
    </location>
    <ligand>
        <name>FAD</name>
        <dbReference type="ChEBI" id="CHEBI:57692"/>
    </ligand>
</feature>
<feature type="binding site" evidence="2">
    <location>
        <position position="452"/>
    </location>
    <ligand>
        <name>FAD</name>
        <dbReference type="ChEBI" id="CHEBI:57692"/>
    </ligand>
</feature>
<feature type="binding site" evidence="2">
    <location>
        <position position="456"/>
    </location>
    <ligand>
        <name>FAD</name>
        <dbReference type="ChEBI" id="CHEBI:57692"/>
    </ligand>
</feature>
<feature type="binding site" evidence="2">
    <location>
        <begin position="479"/>
        <end position="486"/>
    </location>
    <ligand>
        <name>FAD</name>
        <dbReference type="ChEBI" id="CHEBI:57692"/>
    </ligand>
</feature>
<feature type="binding site" evidence="2">
    <location>
        <position position="501"/>
    </location>
    <ligand>
        <name>FAD</name>
        <dbReference type="ChEBI" id="CHEBI:57692"/>
    </ligand>
</feature>
<feature type="binding site" evidence="2">
    <location>
        <position position="504"/>
    </location>
    <ligand>
        <name>FAD</name>
        <dbReference type="ChEBI" id="CHEBI:57692"/>
    </ligand>
</feature>
<feature type="modified residue" description="Phosphoserine" evidence="2">
    <location>
        <position position="427"/>
    </location>
</feature>
<feature type="glycosylation site" description="N-linked (GlcNAc...) asparagine" evidence="4">
    <location>
        <position position="131"/>
    </location>
</feature>
<feature type="glycosylation site" description="N-linked (GlcNAc...) asparagine" evidence="4">
    <location>
        <position position="244"/>
    </location>
</feature>
<feature type="disulfide bond" description="Redox-active" evidence="5 6">
    <location>
        <begin position="71"/>
        <end position="74"/>
    </location>
</feature>
<feature type="disulfide bond" evidence="2">
    <location>
        <begin position="102"/>
        <end position="111"/>
    </location>
</feature>
<feature type="disulfide bond" evidence="5">
    <location>
        <begin position="394"/>
        <end position="406"/>
    </location>
</feature>
<feature type="disulfide bond" evidence="5">
    <location>
        <begin position="450"/>
        <end position="453"/>
    </location>
</feature>
<feature type="disulfide bond" evidence="5">
    <location>
        <begin position="510"/>
        <end position="513"/>
    </location>
</feature>
<dbReference type="EC" id="1.8.3.2"/>
<dbReference type="EMBL" id="U82982">
    <property type="protein sequence ID" value="AAB58401.2"/>
    <property type="molecule type" value="mRNA"/>
</dbReference>
<dbReference type="PIR" id="JC7762">
    <property type="entry name" value="JC7762"/>
</dbReference>
<dbReference type="RefSeq" id="NP_001166479.1">
    <property type="nucleotide sequence ID" value="NM_001173008.2"/>
</dbReference>
<dbReference type="SMR" id="O08841"/>
<dbReference type="FunCoup" id="O08841">
    <property type="interactions" value="296"/>
</dbReference>
<dbReference type="STRING" id="10141.ENSCPOP00000001987"/>
<dbReference type="GlyCosmos" id="O08841">
    <property type="glycosylation" value="2 sites, No reported glycans"/>
</dbReference>
<dbReference type="Ensembl" id="ENSCPOT00000002220.3">
    <property type="protein sequence ID" value="ENSCPOP00000001987.3"/>
    <property type="gene ID" value="ENSCPOG00000002191.4"/>
</dbReference>
<dbReference type="GeneID" id="100135609"/>
<dbReference type="KEGG" id="cpoc:100135609"/>
<dbReference type="CTD" id="5768"/>
<dbReference type="VEuPathDB" id="HostDB:ENSCPOG00000002191"/>
<dbReference type="eggNOG" id="KOG1731">
    <property type="taxonomic scope" value="Eukaryota"/>
</dbReference>
<dbReference type="GeneTree" id="ENSGT00940000159504"/>
<dbReference type="InParanoid" id="O08841"/>
<dbReference type="OMA" id="YGELWNE"/>
<dbReference type="OrthoDB" id="59470at2759"/>
<dbReference type="BRENDA" id="1.8.3.2">
    <property type="organism ID" value="1225"/>
</dbReference>
<dbReference type="Proteomes" id="UP000005447">
    <property type="component" value="Unassembled WGS sequence"/>
</dbReference>
<dbReference type="Bgee" id="ENSCPOG00000002191">
    <property type="expression patterns" value="Expressed in ovary and 12 other cell types or tissues"/>
</dbReference>
<dbReference type="GO" id="GO:0070062">
    <property type="term" value="C:extracellular exosome"/>
    <property type="evidence" value="ECO:0007669"/>
    <property type="project" value="Ensembl"/>
</dbReference>
<dbReference type="GO" id="GO:0005615">
    <property type="term" value="C:extracellular space"/>
    <property type="evidence" value="ECO:0000250"/>
    <property type="project" value="UniProtKB"/>
</dbReference>
<dbReference type="GO" id="GO:0000139">
    <property type="term" value="C:Golgi membrane"/>
    <property type="evidence" value="ECO:0000250"/>
    <property type="project" value="UniProtKB"/>
</dbReference>
<dbReference type="GO" id="GO:0071949">
    <property type="term" value="F:FAD binding"/>
    <property type="evidence" value="ECO:0007669"/>
    <property type="project" value="Ensembl"/>
</dbReference>
<dbReference type="GO" id="GO:0016971">
    <property type="term" value="F:flavin-dependent sulfhydryl oxidase activity"/>
    <property type="evidence" value="ECO:0000250"/>
    <property type="project" value="UniProtKB"/>
</dbReference>
<dbReference type="GO" id="GO:0003756">
    <property type="term" value="F:protein disulfide isomerase activity"/>
    <property type="evidence" value="ECO:0000250"/>
    <property type="project" value="UniProtKB"/>
</dbReference>
<dbReference type="GO" id="GO:0085029">
    <property type="term" value="P:extracellular matrix assembly"/>
    <property type="evidence" value="ECO:0007669"/>
    <property type="project" value="Ensembl"/>
</dbReference>
<dbReference type="GO" id="GO:0016242">
    <property type="term" value="P:negative regulation of macroautophagy"/>
    <property type="evidence" value="ECO:0007669"/>
    <property type="project" value="Ensembl"/>
</dbReference>
<dbReference type="GO" id="GO:0006457">
    <property type="term" value="P:protein folding"/>
    <property type="evidence" value="ECO:0007669"/>
    <property type="project" value="TreeGrafter"/>
</dbReference>
<dbReference type="CDD" id="cd02992">
    <property type="entry name" value="PDI_a_QSOX"/>
    <property type="match status" value="1"/>
</dbReference>
<dbReference type="FunFam" id="1.20.120.1960:FF:000001">
    <property type="entry name" value="Sulfhydryl oxidase"/>
    <property type="match status" value="1"/>
</dbReference>
<dbReference type="FunFam" id="1.20.120.310:FF:000001">
    <property type="entry name" value="Sulfhydryl oxidase"/>
    <property type="match status" value="1"/>
</dbReference>
<dbReference type="FunFam" id="3.40.30.10:FF:000073">
    <property type="entry name" value="Sulfhydryl oxidase"/>
    <property type="match status" value="1"/>
</dbReference>
<dbReference type="FunFam" id="3.40.30.10:FF:000080">
    <property type="entry name" value="Sulfhydryl oxidase"/>
    <property type="match status" value="1"/>
</dbReference>
<dbReference type="Gene3D" id="1.20.120.310">
    <property type="entry name" value="ERV/ALR sulfhydryl oxidase domain"/>
    <property type="match status" value="1"/>
</dbReference>
<dbReference type="Gene3D" id="3.40.30.10">
    <property type="entry name" value="Glutaredoxin"/>
    <property type="match status" value="2"/>
</dbReference>
<dbReference type="Gene3D" id="1.20.120.1960">
    <property type="entry name" value="QSOX sulfhydryl oxidase domain"/>
    <property type="match status" value="1"/>
</dbReference>
<dbReference type="InterPro" id="IPR036774">
    <property type="entry name" value="ERV/ALR_sulphydryl_oxid_sf"/>
</dbReference>
<dbReference type="InterPro" id="IPR017905">
    <property type="entry name" value="ERV/ALR_sulphydryl_oxidase"/>
</dbReference>
<dbReference type="InterPro" id="IPR040986">
    <property type="entry name" value="QSOX_FAD-bd_dom"/>
</dbReference>
<dbReference type="InterPro" id="IPR042568">
    <property type="entry name" value="QSOX_FAD-bd_sf"/>
</dbReference>
<dbReference type="InterPro" id="IPR041269">
    <property type="entry name" value="QSOX_Trx1"/>
</dbReference>
<dbReference type="InterPro" id="IPR039798">
    <property type="entry name" value="Sulfhydryl_oxidase"/>
</dbReference>
<dbReference type="InterPro" id="IPR036249">
    <property type="entry name" value="Thioredoxin-like_sf"/>
</dbReference>
<dbReference type="InterPro" id="IPR013766">
    <property type="entry name" value="Thioredoxin_domain"/>
</dbReference>
<dbReference type="PANTHER" id="PTHR22897">
    <property type="entry name" value="QUIESCIN Q6-RELATED SULFHYDRYL OXIDASE"/>
    <property type="match status" value="1"/>
</dbReference>
<dbReference type="PANTHER" id="PTHR22897:SF6">
    <property type="entry name" value="SULFHYDRYL OXIDASE 1"/>
    <property type="match status" value="1"/>
</dbReference>
<dbReference type="Pfam" id="PF04777">
    <property type="entry name" value="Evr1_Alr"/>
    <property type="match status" value="1"/>
</dbReference>
<dbReference type="Pfam" id="PF18371">
    <property type="entry name" value="FAD_SOX"/>
    <property type="match status" value="1"/>
</dbReference>
<dbReference type="Pfam" id="PF18108">
    <property type="entry name" value="QSOX_Trx1"/>
    <property type="match status" value="1"/>
</dbReference>
<dbReference type="Pfam" id="PF00085">
    <property type="entry name" value="Thioredoxin"/>
    <property type="match status" value="1"/>
</dbReference>
<dbReference type="SUPFAM" id="SSF69000">
    <property type="entry name" value="FAD-dependent thiol oxidase"/>
    <property type="match status" value="1"/>
</dbReference>
<dbReference type="SUPFAM" id="SSF52833">
    <property type="entry name" value="Thioredoxin-like"/>
    <property type="match status" value="1"/>
</dbReference>
<dbReference type="PROSITE" id="PS51324">
    <property type="entry name" value="ERV_ALR"/>
    <property type="match status" value="1"/>
</dbReference>
<dbReference type="PROSITE" id="PS51352">
    <property type="entry name" value="THIOREDOXIN_2"/>
    <property type="match status" value="1"/>
</dbReference>
<organism>
    <name type="scientific">Cavia porcellus</name>
    <name type="common">Guinea pig</name>
    <dbReference type="NCBI Taxonomy" id="10141"/>
    <lineage>
        <taxon>Eukaryota</taxon>
        <taxon>Metazoa</taxon>
        <taxon>Chordata</taxon>
        <taxon>Craniata</taxon>
        <taxon>Vertebrata</taxon>
        <taxon>Euteleostomi</taxon>
        <taxon>Mammalia</taxon>
        <taxon>Eutheria</taxon>
        <taxon>Euarchontoglires</taxon>
        <taxon>Glires</taxon>
        <taxon>Rodentia</taxon>
        <taxon>Hystricomorpha</taxon>
        <taxon>Caviidae</taxon>
        <taxon>Cavia</taxon>
    </lineage>
</organism>
<accession>O08841</accession>
<keyword id="KW-1015">Disulfide bond</keyword>
<keyword id="KW-0274">FAD</keyword>
<keyword id="KW-0285">Flavoprotein</keyword>
<keyword id="KW-0325">Glycoprotein</keyword>
<keyword id="KW-0560">Oxidoreductase</keyword>
<keyword id="KW-0597">Phosphoprotein</keyword>
<keyword id="KW-1185">Reference proteome</keyword>
<keyword id="KW-0964">Secreted</keyword>
<keyword id="KW-0732">Signal</keyword>
<gene>
    <name type="primary">QSOX1</name>
    <name type="synonym">GEC3</name>
    <name type="synonym">QSCN6</name>
    <name type="synonym">SOX3</name>
</gene>
<protein>
    <recommendedName>
        <fullName>Sulfhydryl oxidase 1</fullName>
        <ecNumber>1.8.3.2</ecNumber>
    </recommendedName>
    <alternativeName>
        <fullName evidence="8">FAD-dependent sulfhydryl oxidase-3</fullName>
        <shortName evidence="8">SOx-3</shortName>
    </alternativeName>
    <alternativeName>
        <fullName>Glandular epithelial cells protein 3</fullName>
    </alternativeName>
    <alternativeName>
        <fullName>Quiescin Q6</fullName>
    </alternativeName>
</protein>
<sequence length="613" mass="68595">MTGCGRRSGWLPPLRLLLLPLLLGGPGVGAAQLAALYSASDPLTLLQADTVRSTVLNSPSAWAVEFFASWCGHCIAFAPTWKALAKDIKDWRPALNLAALNCADETNNAVCRDFNIAGFPSVRFFKAFSKNSTGTTLPVAGANVQMLRERLIDALESHHDTWPSACPPLEPVKPKEIDTFFARNNQEYLVLIFEQENSYLGREVTLDLSQHHDLVVRRVLSTEANVVRKFGVADFPSCYLLFRNGSVSRVPVLVESRRFYTAYLQRLSEVTREGTPTPAVPTISDQIAPTVWKFADRSKIYMADLESALHYILRVEVGRFSVLEGQRLMALKKFVTVLTKYFPGQPLVRNFLQSTNEWLKRQHKKKMPYSFFKTAMDSRNEEAVITKEVNWVGCQGSESHFRGFPCSLWILFHFLTVQASQKNAESSQKPANGQEVLQAIRNYVRFFFGCRDCANHFEQMAAGSMHRVKSPNDAVLWLWTSHNRVNARLAGAPSEDPQFPKVQWPPPELCSACHNELSGEPVWDVDATLRFLKTHFSPSNIVLNFPPAEPASRSSVHSWGATPHLELDALGLVTRNSALALERAEISESPGSNAMPNIPAERPELFEALSHSR</sequence>
<comment type="function">
    <text evidence="2">Catalyzes the oxidation of sulfhydryl groups in peptide and protein thiols to disulfides with the reduction of oxygen to hydrogen peroxide. Plays a role in disulfide bond formation in a variety of extracellular proteins. In fibroblasts, required for normal incorporation of laminin into the extracellular matrix, and thereby for normal cell-cell adhesion and cell migration.</text>
</comment>
<comment type="catalytic activity">
    <reaction evidence="2">
        <text>2 R'C(R)SH + O2 = R'C(R)S-S(R)CR' + H2O2</text>
        <dbReference type="Rhea" id="RHEA:17357"/>
        <dbReference type="ChEBI" id="CHEBI:15379"/>
        <dbReference type="ChEBI" id="CHEBI:16240"/>
        <dbReference type="ChEBI" id="CHEBI:16520"/>
        <dbReference type="ChEBI" id="CHEBI:17412"/>
        <dbReference type="EC" id="1.8.3.2"/>
    </reaction>
</comment>
<comment type="cofactor">
    <cofactor evidence="2">
        <name>FAD</name>
        <dbReference type="ChEBI" id="CHEBI:57692"/>
    </cofactor>
    <text evidence="2">Binds 1 FAD per subunit.</text>
</comment>
<comment type="subunit">
    <text evidence="3">Monomer.</text>
</comment>
<comment type="subcellular location">
    <subcellularLocation>
        <location evidence="9">Secreted</location>
    </subcellularLocation>
</comment>
<comment type="tissue specificity">
    <text evidence="7">Detected in endometrium and in uterus glandular epithelial cells (at protein level). Expressed in testis, placenta, pancreas, lung, ovary, endometrium, but not in brain, liver and kidney tissues. Higher expression in epithelial cells.</text>
</comment>
<comment type="PTM">
    <text evidence="2">N-glycosylated. O-glycosylated on Thr and Ser residues.</text>
</comment>
<comment type="similarity">
    <text evidence="9">Belongs to the quiescin-sulfhydryl oxidase (QSOX) family.</text>
</comment>
<name>QSOX1_CAVPO</name>